<gene>
    <name evidence="1" type="primary">recR</name>
    <name type="ordered locus">VV2409</name>
</gene>
<evidence type="ECO:0000255" key="1">
    <source>
        <dbReference type="HAMAP-Rule" id="MF_00017"/>
    </source>
</evidence>
<organism>
    <name type="scientific">Vibrio vulnificus (strain YJ016)</name>
    <dbReference type="NCBI Taxonomy" id="196600"/>
    <lineage>
        <taxon>Bacteria</taxon>
        <taxon>Pseudomonadati</taxon>
        <taxon>Pseudomonadota</taxon>
        <taxon>Gammaproteobacteria</taxon>
        <taxon>Vibrionales</taxon>
        <taxon>Vibrionaceae</taxon>
        <taxon>Vibrio</taxon>
    </lineage>
</organism>
<feature type="chain" id="PRO_0000190424" description="Recombination protein RecR">
    <location>
        <begin position="1"/>
        <end position="200"/>
    </location>
</feature>
<feature type="domain" description="Toprim" evidence="1">
    <location>
        <begin position="81"/>
        <end position="176"/>
    </location>
</feature>
<feature type="zinc finger region" description="C4-type" evidence="1">
    <location>
        <begin position="57"/>
        <end position="72"/>
    </location>
</feature>
<accession>Q7MIV4</accession>
<keyword id="KW-0227">DNA damage</keyword>
<keyword id="KW-0233">DNA recombination</keyword>
<keyword id="KW-0234">DNA repair</keyword>
<keyword id="KW-0479">Metal-binding</keyword>
<keyword id="KW-0862">Zinc</keyword>
<keyword id="KW-0863">Zinc-finger</keyword>
<reference key="1">
    <citation type="journal article" date="2003" name="Genome Res.">
        <title>Comparative genome analysis of Vibrio vulnificus, a marine pathogen.</title>
        <authorList>
            <person name="Chen C.-Y."/>
            <person name="Wu K.-M."/>
            <person name="Chang Y.-C."/>
            <person name="Chang C.-H."/>
            <person name="Tsai H.-C."/>
            <person name="Liao T.-L."/>
            <person name="Liu Y.-M."/>
            <person name="Chen H.-J."/>
            <person name="Shen A.B.-T."/>
            <person name="Li J.-C."/>
            <person name="Su T.-L."/>
            <person name="Shao C.-P."/>
            <person name="Lee C.-T."/>
            <person name="Hor L.-I."/>
            <person name="Tsai S.-F."/>
        </authorList>
    </citation>
    <scope>NUCLEOTIDE SEQUENCE [LARGE SCALE GENOMIC DNA]</scope>
    <source>
        <strain>YJ016</strain>
    </source>
</reference>
<protein>
    <recommendedName>
        <fullName evidence="1">Recombination protein RecR</fullName>
    </recommendedName>
</protein>
<proteinExistence type="inferred from homology"/>
<name>RECR_VIBVY</name>
<sequence length="200" mass="21871">MRTSHMLEQLMEALRCLPGVGPKSAQRMAFHLLQRDRKGGLQLADALSHAMTEIGHCNECRTFTEEDVCHICNNPKRQENGLLCVVESPADIAAVEATGQFSGRYFVLMGHLSPLDGIGPSDIGLDVLDYRLRRGDIKEVILATNPTVEGEATAHYIAELCREHKVDASRIAHGVPVGGELELVDGTTLSHSLLGRHKLN</sequence>
<dbReference type="EMBL" id="BA000037">
    <property type="protein sequence ID" value="BAC95173.1"/>
    <property type="molecule type" value="Genomic_DNA"/>
</dbReference>
<dbReference type="RefSeq" id="WP_011079901.1">
    <property type="nucleotide sequence ID" value="NC_005139.1"/>
</dbReference>
<dbReference type="SMR" id="Q7MIV4"/>
<dbReference type="STRING" id="672.VV93_v1c21160"/>
<dbReference type="GeneID" id="93896224"/>
<dbReference type="KEGG" id="vvy:VV2409"/>
<dbReference type="eggNOG" id="COG0353">
    <property type="taxonomic scope" value="Bacteria"/>
</dbReference>
<dbReference type="HOGENOM" id="CLU_060739_1_2_6"/>
<dbReference type="Proteomes" id="UP000002675">
    <property type="component" value="Chromosome I"/>
</dbReference>
<dbReference type="GO" id="GO:0003677">
    <property type="term" value="F:DNA binding"/>
    <property type="evidence" value="ECO:0007669"/>
    <property type="project" value="UniProtKB-UniRule"/>
</dbReference>
<dbReference type="GO" id="GO:0008270">
    <property type="term" value="F:zinc ion binding"/>
    <property type="evidence" value="ECO:0007669"/>
    <property type="project" value="UniProtKB-KW"/>
</dbReference>
<dbReference type="GO" id="GO:0006310">
    <property type="term" value="P:DNA recombination"/>
    <property type="evidence" value="ECO:0007669"/>
    <property type="project" value="UniProtKB-UniRule"/>
</dbReference>
<dbReference type="GO" id="GO:0006281">
    <property type="term" value="P:DNA repair"/>
    <property type="evidence" value="ECO:0007669"/>
    <property type="project" value="UniProtKB-UniRule"/>
</dbReference>
<dbReference type="CDD" id="cd01025">
    <property type="entry name" value="TOPRIM_recR"/>
    <property type="match status" value="1"/>
</dbReference>
<dbReference type="FunFam" id="1.10.8.420:FF:000001">
    <property type="entry name" value="Recombination protein RecR"/>
    <property type="match status" value="1"/>
</dbReference>
<dbReference type="FunFam" id="3.40.1360.10:FF:000001">
    <property type="entry name" value="Recombination protein RecR"/>
    <property type="match status" value="1"/>
</dbReference>
<dbReference type="Gene3D" id="3.40.1360.10">
    <property type="match status" value="1"/>
</dbReference>
<dbReference type="Gene3D" id="6.10.250.240">
    <property type="match status" value="1"/>
</dbReference>
<dbReference type="Gene3D" id="1.10.8.420">
    <property type="entry name" value="RecR Domain 1"/>
    <property type="match status" value="1"/>
</dbReference>
<dbReference type="HAMAP" id="MF_00017">
    <property type="entry name" value="RecR"/>
    <property type="match status" value="1"/>
</dbReference>
<dbReference type="InterPro" id="IPR000093">
    <property type="entry name" value="DNA_Rcmb_RecR"/>
</dbReference>
<dbReference type="InterPro" id="IPR023627">
    <property type="entry name" value="Rcmb_RecR"/>
</dbReference>
<dbReference type="InterPro" id="IPR015967">
    <property type="entry name" value="Rcmb_RecR_Znf"/>
</dbReference>
<dbReference type="InterPro" id="IPR006171">
    <property type="entry name" value="TOPRIM_dom"/>
</dbReference>
<dbReference type="InterPro" id="IPR034137">
    <property type="entry name" value="TOPRIM_RecR"/>
</dbReference>
<dbReference type="NCBIfam" id="TIGR00615">
    <property type="entry name" value="recR"/>
    <property type="match status" value="1"/>
</dbReference>
<dbReference type="PANTHER" id="PTHR30446">
    <property type="entry name" value="RECOMBINATION PROTEIN RECR"/>
    <property type="match status" value="1"/>
</dbReference>
<dbReference type="PANTHER" id="PTHR30446:SF0">
    <property type="entry name" value="RECOMBINATION PROTEIN RECR"/>
    <property type="match status" value="1"/>
</dbReference>
<dbReference type="Pfam" id="PF21175">
    <property type="entry name" value="RecR_C"/>
    <property type="match status" value="1"/>
</dbReference>
<dbReference type="Pfam" id="PF21176">
    <property type="entry name" value="RecR_HhH"/>
    <property type="match status" value="1"/>
</dbReference>
<dbReference type="Pfam" id="PF02132">
    <property type="entry name" value="RecR_ZnF"/>
    <property type="match status" value="1"/>
</dbReference>
<dbReference type="Pfam" id="PF13662">
    <property type="entry name" value="Toprim_4"/>
    <property type="match status" value="1"/>
</dbReference>
<dbReference type="SMART" id="SM00493">
    <property type="entry name" value="TOPRIM"/>
    <property type="match status" value="1"/>
</dbReference>
<dbReference type="SUPFAM" id="SSF111304">
    <property type="entry name" value="Recombination protein RecR"/>
    <property type="match status" value="1"/>
</dbReference>
<dbReference type="PROSITE" id="PS01300">
    <property type="entry name" value="RECR"/>
    <property type="match status" value="1"/>
</dbReference>
<dbReference type="PROSITE" id="PS50880">
    <property type="entry name" value="TOPRIM"/>
    <property type="match status" value="1"/>
</dbReference>
<comment type="function">
    <text evidence="1">May play a role in DNA repair. It seems to be involved in an RecBC-independent recombinational process of DNA repair. It may act with RecF and RecO.</text>
</comment>
<comment type="similarity">
    <text evidence="1">Belongs to the RecR family.</text>
</comment>